<name>MSRE_HUMAN</name>
<gene>
    <name type="primary">MSR1</name>
    <name type="synonym">SCARA1</name>
</gene>
<sequence length="451" mass="49762">MEQWDHFHNQQEDTDSCSESVKFDARSMTALLPPNPKNSPSLQEKLKSFKAALIALYLLVFAVLIPLIGIVAAQLLKWETKNCSVSSTNANDITQSLTGKGNDSEEEMRFQEVFMEHMSNMEKRIQHILDMEANLMDTEHFQNFSMTTDQRFNDILLQLSTLFSSVQGHGNAIDEISKSLISLNTTLLDLQLNIENLNGKIQENTFKQQEEISKLEERVYNVSAEIMAMKEEQVHLEQEIKGEVKVLNNITNDLRLKDWEHSQTLRNITLIQGPPGPPGEKGDRGPTGESGPRGFPGPIGPPGLKGDRGAIGFPGSRGLPGYAGRPGNSGPKGQKGEKGSGNTLTPFTKVRLVGGSGPHEGRVEILHSGQWGTICDDRWEVRVGQVVCRSLGYPGVQAVHKAAHFGQGTGPIWLNEVFCFGRESSIEECKIRQWGTRACSHSEDAGVTCTL</sequence>
<proteinExistence type="evidence at protein level"/>
<comment type="function">
    <text evidence="8 11">Membrane glycoproteins implicated in the pathologic deposition of cholesterol in arterial walls during atherogenesis. Two types of receptor subunits exist. These receptors mediate the endocytosis of a diverse group of macromolecules, including modified low density lipoproteins (LDL) (PubMed:2251254). Isoform III does not internalize acetylated LDL (PubMed:9548586).</text>
</comment>
<comment type="subunit">
    <text evidence="1 9">Homotrimer (By similarity). Interacts with MYO18A (PubMed:25965346).</text>
</comment>
<comment type="interaction">
    <interactant intactId="EBI-1776976">
        <id>P21757</id>
    </interactant>
    <interactant intactId="EBI-721179">
        <id>P27449</id>
        <label>ATP6V0C</label>
    </interactant>
    <organismsDiffer>false</organismsDiffer>
    <experiments>6</experiments>
</comment>
<comment type="interaction">
    <interactant intactId="EBI-1776976">
        <id>P21757</id>
    </interactant>
    <interactant intactId="EBI-11337888">
        <id>Q7L5A8</id>
        <label>FA2H</label>
    </interactant>
    <organismsDiffer>false</organismsDiffer>
    <experiments>3</experiments>
</comment>
<comment type="interaction">
    <interactant intactId="EBI-1776976">
        <id>P21757</id>
    </interactant>
    <interactant intactId="EBI-1777078">
        <id>Q86VS8</id>
        <label>HOOK3</label>
    </interactant>
    <organismsDiffer>false</organismsDiffer>
    <experiments>4</experiments>
</comment>
<comment type="interaction">
    <interactant intactId="EBI-1776976">
        <id>P21757</id>
    </interactant>
    <interactant intactId="EBI-750776">
        <id>O95214</id>
        <label>LEPROTL1</label>
    </interactant>
    <organismsDiffer>false</organismsDiffer>
    <experiments>4</experiments>
</comment>
<comment type="interaction">
    <interactant intactId="EBI-1776976">
        <id>P21757</id>
    </interactant>
    <interactant intactId="EBI-10249700">
        <id>Q6FHL7</id>
        <label>LEPROTL1</label>
    </interactant>
    <organismsDiffer>false</organismsDiffer>
    <experiments>3</experiments>
</comment>
<comment type="interaction">
    <interactant intactId="EBI-1776976">
        <id>P21757</id>
    </interactant>
    <interactant intactId="EBI-750078">
        <id>Q13021</id>
        <label>MALL</label>
    </interactant>
    <organismsDiffer>false</organismsDiffer>
    <experiments>6</experiments>
</comment>
<comment type="interaction">
    <interactant intactId="EBI-1776976">
        <id>P21757</id>
    </interactant>
    <interactant intactId="EBI-3919611">
        <id>Q16617</id>
        <label>NKG7</label>
    </interactant>
    <organismsDiffer>false</organismsDiffer>
    <experiments>7</experiments>
</comment>
<comment type="interaction">
    <interactant intactId="EBI-1776976">
        <id>P21757</id>
    </interactant>
    <interactant intactId="EBI-8652744">
        <id>Q96IW7</id>
        <label>SEC22A</label>
    </interactant>
    <organismsDiffer>false</organismsDiffer>
    <experiments>7</experiments>
</comment>
<comment type="interaction">
    <interactant intactId="EBI-1776976">
        <id>P21757</id>
    </interactant>
    <interactant intactId="EBI-1777000">
        <id>Q7TQ77</id>
        <label>AABR07026291.1</label>
    </interactant>
    <organismsDiffer>true</organismsDiffer>
    <experiments>2</experiments>
</comment>
<comment type="subcellular location">
    <subcellularLocation>
        <location>Membrane</location>
        <topology>Single-pass type II membrane protein</topology>
    </subcellularLocation>
</comment>
<comment type="alternative products">
    <event type="alternative splicing"/>
    <isoform>
        <id>P21757-1</id>
        <name>I</name>
        <sequence type="displayed"/>
    </isoform>
    <isoform>
        <id>P21757-2</id>
        <name>II</name>
        <sequence type="described" ref="VSP_006229 VSP_006230"/>
    </isoform>
    <isoform>
        <id>P21757-3</id>
        <name>III</name>
        <sequence type="described" ref="VSP_036842"/>
    </isoform>
</comment>
<comment type="tissue specificity">
    <text evidence="8 11">Isoform I, isoform II and isoform III are expressed in monocyte-derived macrophages. Isoform I and isoform II are expressed in the liver, placenta and brain.</text>
</comment>
<comment type="disease" evidence="5">
    <disease id="DI-02663">
        <name>Prostate cancer</name>
        <acronym>PC</acronym>
        <description>A malignancy originating in tissues of the prostate. Most prostate cancers are adenocarcinomas that develop in the acini of the prostatic ducts. Other rare histopathologic types of prostate cancer that occur in approximately 5% of patients include small cell carcinoma, mucinous carcinoma, prostatic ductal carcinoma, transitional cell carcinoma, squamous cell carcinoma, basal cell carcinoma, adenoid cystic carcinoma (basaloid), signet-ring cell carcinoma and neuroendocrine carcinoma.</description>
        <dbReference type="MIM" id="176807"/>
    </disease>
    <text>The disease may be caused by variants affecting the gene represented in this entry. MSR1 variants may play a role in susceptibility to prostate cancer. MSR1 variants have been found in individuals with prostate cancer and co-segregate with the disease in some families.</text>
</comment>
<comment type="disease" evidence="7">
    <disease id="DI-03276">
        <name>Barrett esophagus</name>
        <acronym>BE</acronym>
        <description>A condition characterized by a metaplastic change in which normal esophageal squamous epithelium is replaced by a columnar and intestinal-type epithelium. Patients with Barrett esophagus have an increased risk of esophageal adenocarcinoma. The main cause of Barrett esophagus is gastroesophageal reflux. The retrograde movement of acid and bile salts from the stomach into the esophagus causes prolonged injury to the esophageal epithelium and induces chronic esophagitis, which in turn is believed to trigger the pathologic changes.</description>
        <dbReference type="MIM" id="614266"/>
    </disease>
    <text>The disease may be caused by variants affecting the gene represented in this entry. Genetic variants in MSR1 have been found in individuals with Barrett esophagus and are thought to contribute to disease susceptibility.</text>
</comment>
<comment type="miscellaneous">
    <molecule>Isoform II</molecule>
    <text evidence="15">May be produced at very low levels due to a premature stop codon in the mRNA, leading to nonsense-mediated mRNA decay.</text>
</comment>
<dbReference type="EMBL" id="D90187">
    <property type="protein sequence ID" value="BAA14208.1"/>
    <property type="molecule type" value="mRNA"/>
</dbReference>
<dbReference type="EMBL" id="D90188">
    <property type="protein sequence ID" value="BAA14209.1"/>
    <property type="molecule type" value="mRNA"/>
</dbReference>
<dbReference type="EMBL" id="AF037351">
    <property type="protein sequence ID" value="AAC09251.1"/>
    <property type="molecule type" value="mRNA"/>
</dbReference>
<dbReference type="EMBL" id="DQ144993">
    <property type="protein sequence ID" value="AAZ38715.1"/>
    <property type="molecule type" value="Genomic_DNA"/>
</dbReference>
<dbReference type="EMBL" id="AC023396">
    <property type="status" value="NOT_ANNOTATED_CDS"/>
    <property type="molecule type" value="Genomic_DNA"/>
</dbReference>
<dbReference type="EMBL" id="CH471080">
    <property type="protein sequence ID" value="EAW63832.1"/>
    <property type="molecule type" value="Genomic_DNA"/>
</dbReference>
<dbReference type="EMBL" id="CH471080">
    <property type="protein sequence ID" value="EAW63830.1"/>
    <property type="molecule type" value="Genomic_DNA"/>
</dbReference>
<dbReference type="EMBL" id="CH471080">
    <property type="protein sequence ID" value="EAW63833.1"/>
    <property type="molecule type" value="Genomic_DNA"/>
</dbReference>
<dbReference type="EMBL" id="CH471080">
    <property type="protein sequence ID" value="EAW63834.1"/>
    <property type="molecule type" value="Genomic_DNA"/>
</dbReference>
<dbReference type="EMBL" id="BC063878">
    <property type="protein sequence ID" value="AAH63878.1"/>
    <property type="molecule type" value="mRNA"/>
</dbReference>
<dbReference type="EMBL" id="D13263">
    <property type="status" value="NOT_ANNOTATED_CDS"/>
    <property type="molecule type" value="Genomic_DNA"/>
</dbReference>
<dbReference type="CCDS" id="CCDS5995.1">
    <molecule id="P21757-1"/>
</dbReference>
<dbReference type="CCDS" id="CCDS5996.1">
    <molecule id="P21757-3"/>
</dbReference>
<dbReference type="CCDS" id="CCDS5997.1">
    <molecule id="P21757-2"/>
</dbReference>
<dbReference type="PIR" id="A38415">
    <property type="entry name" value="A38415"/>
</dbReference>
<dbReference type="PIR" id="B38415">
    <property type="entry name" value="B38415"/>
</dbReference>
<dbReference type="RefSeq" id="NP_002436.1">
    <molecule id="P21757-2"/>
    <property type="nucleotide sequence ID" value="NM_002445.4"/>
</dbReference>
<dbReference type="RefSeq" id="NP_619729.1">
    <molecule id="P21757-1"/>
    <property type="nucleotide sequence ID" value="NM_138715.3"/>
</dbReference>
<dbReference type="RefSeq" id="NP_619730.1">
    <molecule id="P21757-3"/>
    <property type="nucleotide sequence ID" value="NM_138716.3"/>
</dbReference>
<dbReference type="PDB" id="7DPX">
    <property type="method" value="X-ray"/>
    <property type="resolution" value="2.00 A"/>
    <property type="chains" value="A=349-451"/>
</dbReference>
<dbReference type="PDBsum" id="7DPX"/>
<dbReference type="SMR" id="P21757"/>
<dbReference type="BioGRID" id="110587">
    <property type="interactions" value="24"/>
</dbReference>
<dbReference type="FunCoup" id="P21757">
    <property type="interactions" value="246"/>
</dbReference>
<dbReference type="IntAct" id="P21757">
    <property type="interactions" value="14"/>
</dbReference>
<dbReference type="MINT" id="P21757"/>
<dbReference type="STRING" id="9606.ENSP00000405453"/>
<dbReference type="BindingDB" id="P21757"/>
<dbReference type="ChEMBL" id="CHEMBL5811"/>
<dbReference type="GlyCosmos" id="P21757">
    <property type="glycosylation" value="7 sites, No reported glycans"/>
</dbReference>
<dbReference type="GlyGen" id="P21757">
    <property type="glycosylation" value="7 sites, 10 N-linked glycans (2 sites)"/>
</dbReference>
<dbReference type="iPTMnet" id="P21757"/>
<dbReference type="PhosphoSitePlus" id="P21757"/>
<dbReference type="BioMuta" id="MSR1"/>
<dbReference type="DMDM" id="127357"/>
<dbReference type="jPOST" id="P21757"/>
<dbReference type="MassIVE" id="P21757"/>
<dbReference type="PaxDb" id="9606-ENSP00000262101"/>
<dbReference type="PeptideAtlas" id="P21757"/>
<dbReference type="ProteomicsDB" id="53900">
    <molecule id="P21757-1"/>
</dbReference>
<dbReference type="ProteomicsDB" id="53901">
    <molecule id="P21757-2"/>
</dbReference>
<dbReference type="ProteomicsDB" id="53902">
    <molecule id="P21757-3"/>
</dbReference>
<dbReference type="Antibodypedia" id="601">
    <property type="antibodies" value="948 antibodies from 40 providers"/>
</dbReference>
<dbReference type="DNASU" id="4481"/>
<dbReference type="Ensembl" id="ENST00000262101.10">
    <molecule id="P21757-1"/>
    <property type="protein sequence ID" value="ENSP00000262101.5"/>
    <property type="gene ID" value="ENSG00000038945.15"/>
</dbReference>
<dbReference type="Ensembl" id="ENST00000350896.3">
    <molecule id="P21757-3"/>
    <property type="protein sequence ID" value="ENSP00000262100.3"/>
    <property type="gene ID" value="ENSG00000038945.15"/>
</dbReference>
<dbReference type="Ensembl" id="ENST00000355282.6">
    <molecule id="P21757-3"/>
    <property type="protein sequence ID" value="ENSP00000347430.2"/>
    <property type="gene ID" value="ENSG00000038945.15"/>
</dbReference>
<dbReference type="Ensembl" id="ENST00000381998.8">
    <molecule id="P21757-2"/>
    <property type="protein sequence ID" value="ENSP00000371428.4"/>
    <property type="gene ID" value="ENSG00000038945.15"/>
</dbReference>
<dbReference type="GeneID" id="4481"/>
<dbReference type="KEGG" id="hsa:4481"/>
<dbReference type="MANE-Select" id="ENST00000262101.10">
    <property type="protein sequence ID" value="ENSP00000262101.5"/>
    <property type="RefSeq nucleotide sequence ID" value="NM_138715.3"/>
    <property type="RefSeq protein sequence ID" value="NP_619729.1"/>
</dbReference>
<dbReference type="UCSC" id="uc003wwz.4">
    <molecule id="P21757-1"/>
    <property type="organism name" value="human"/>
</dbReference>
<dbReference type="AGR" id="HGNC:7376"/>
<dbReference type="CTD" id="4481"/>
<dbReference type="DisGeNET" id="4481"/>
<dbReference type="GeneCards" id="MSR1"/>
<dbReference type="HGNC" id="HGNC:7376">
    <property type="gene designation" value="MSR1"/>
</dbReference>
<dbReference type="HPA" id="ENSG00000038945">
    <property type="expression patterns" value="Tissue enriched (lung)"/>
</dbReference>
<dbReference type="MalaCards" id="MSR1"/>
<dbReference type="MIM" id="153622">
    <property type="type" value="gene"/>
</dbReference>
<dbReference type="MIM" id="176807">
    <property type="type" value="phenotype"/>
</dbReference>
<dbReference type="MIM" id="614266">
    <property type="type" value="phenotype"/>
</dbReference>
<dbReference type="neXtProt" id="NX_P21757"/>
<dbReference type="OpenTargets" id="ENSG00000038945"/>
<dbReference type="Orphanet" id="1331">
    <property type="disease" value="Familial prostate cancer"/>
</dbReference>
<dbReference type="PharmGKB" id="PA31181"/>
<dbReference type="VEuPathDB" id="HostDB:ENSG00000038945"/>
<dbReference type="eggNOG" id="ENOG502QUW0">
    <property type="taxonomic scope" value="Eukaryota"/>
</dbReference>
<dbReference type="GeneTree" id="ENSGT00950000183074"/>
<dbReference type="HOGENOM" id="CLU_041152_2_0_1"/>
<dbReference type="InParanoid" id="P21757"/>
<dbReference type="OMA" id="DDHWEIR"/>
<dbReference type="OrthoDB" id="536948at2759"/>
<dbReference type="PAN-GO" id="P21757">
    <property type="GO annotations" value="6 GO annotations based on evolutionary models"/>
</dbReference>
<dbReference type="PhylomeDB" id="P21757"/>
<dbReference type="TreeFam" id="TF330855"/>
<dbReference type="PathwayCommons" id="P21757"/>
<dbReference type="Reactome" id="R-HSA-3000480">
    <property type="pathway name" value="Scavenging by Class A Receptors"/>
</dbReference>
<dbReference type="SignaLink" id="P21757"/>
<dbReference type="SIGNOR" id="P21757"/>
<dbReference type="BioGRID-ORCS" id="4481">
    <property type="hits" value="14 hits in 1153 CRISPR screens"/>
</dbReference>
<dbReference type="ChiTaRS" id="MSR1">
    <property type="organism name" value="human"/>
</dbReference>
<dbReference type="GeneWiki" id="MSR1"/>
<dbReference type="GenomeRNAi" id="4481"/>
<dbReference type="Pharos" id="P21757">
    <property type="development level" value="Tbio"/>
</dbReference>
<dbReference type="PRO" id="PR:P21757"/>
<dbReference type="Proteomes" id="UP000005640">
    <property type="component" value="Chromosome 8"/>
</dbReference>
<dbReference type="RNAct" id="P21757">
    <property type="molecule type" value="protein"/>
</dbReference>
<dbReference type="Bgee" id="ENSG00000038945">
    <property type="expression patterns" value="Expressed in right lung and 129 other cell types or tissues"/>
</dbReference>
<dbReference type="ExpressionAtlas" id="P21757">
    <property type="expression patterns" value="baseline and differential"/>
</dbReference>
<dbReference type="GO" id="GO:0005581">
    <property type="term" value="C:collagen trimer"/>
    <property type="evidence" value="ECO:0007669"/>
    <property type="project" value="UniProtKB-KW"/>
</dbReference>
<dbReference type="GO" id="GO:0030666">
    <property type="term" value="C:endocytic vesicle membrane"/>
    <property type="evidence" value="ECO:0000304"/>
    <property type="project" value="Reactome"/>
</dbReference>
<dbReference type="GO" id="GO:0034362">
    <property type="term" value="C:low-density lipoprotein particle"/>
    <property type="evidence" value="ECO:0007669"/>
    <property type="project" value="UniProtKB-KW"/>
</dbReference>
<dbReference type="GO" id="GO:0016020">
    <property type="term" value="C:membrane"/>
    <property type="evidence" value="ECO:0000303"/>
    <property type="project" value="ARUK-UCL"/>
</dbReference>
<dbReference type="GO" id="GO:0005886">
    <property type="term" value="C:plasma membrane"/>
    <property type="evidence" value="ECO:0000250"/>
    <property type="project" value="ARUK-UCL"/>
</dbReference>
<dbReference type="GO" id="GO:0001540">
    <property type="term" value="F:amyloid-beta binding"/>
    <property type="evidence" value="ECO:0000250"/>
    <property type="project" value="ARUK-UCL"/>
</dbReference>
<dbReference type="GO" id="GO:0038024">
    <property type="term" value="F:cargo receptor activity"/>
    <property type="evidence" value="ECO:0000250"/>
    <property type="project" value="ARUK-UCL"/>
</dbReference>
<dbReference type="GO" id="GO:0030169">
    <property type="term" value="F:low-density lipoprotein particle binding"/>
    <property type="evidence" value="ECO:0000250"/>
    <property type="project" value="BHF-UCL"/>
</dbReference>
<dbReference type="GO" id="GO:0005044">
    <property type="term" value="F:scavenger receptor activity"/>
    <property type="evidence" value="ECO:0000304"/>
    <property type="project" value="ARUK-UCL"/>
</dbReference>
<dbReference type="GO" id="GO:0097242">
    <property type="term" value="P:amyloid-beta clearance"/>
    <property type="evidence" value="ECO:0000250"/>
    <property type="project" value="ARUK-UCL"/>
</dbReference>
<dbReference type="GO" id="GO:0030301">
    <property type="term" value="P:cholesterol transport"/>
    <property type="evidence" value="ECO:0000250"/>
    <property type="project" value="BHF-UCL"/>
</dbReference>
<dbReference type="GO" id="GO:0051649">
    <property type="term" value="P:establishment of localization in cell"/>
    <property type="evidence" value="ECO:0007669"/>
    <property type="project" value="Ensembl"/>
</dbReference>
<dbReference type="GO" id="GO:0042953">
    <property type="term" value="P:lipoprotein transport"/>
    <property type="evidence" value="ECO:0007669"/>
    <property type="project" value="Ensembl"/>
</dbReference>
<dbReference type="GO" id="GO:0010629">
    <property type="term" value="P:negative regulation of gene expression"/>
    <property type="evidence" value="ECO:0000250"/>
    <property type="project" value="ARUK-UCL"/>
</dbReference>
<dbReference type="GO" id="GO:0006911">
    <property type="term" value="P:phagocytosis, engulfment"/>
    <property type="evidence" value="ECO:0000250"/>
    <property type="project" value="ARUK-UCL"/>
</dbReference>
<dbReference type="GO" id="GO:0034381">
    <property type="term" value="P:plasma lipoprotein particle clearance"/>
    <property type="evidence" value="ECO:0000250"/>
    <property type="project" value="BHF-UCL"/>
</dbReference>
<dbReference type="GO" id="GO:0010886">
    <property type="term" value="P:positive regulation of cholesterol storage"/>
    <property type="evidence" value="ECO:0000250"/>
    <property type="project" value="BHF-UCL"/>
</dbReference>
<dbReference type="GO" id="GO:0010744">
    <property type="term" value="P:positive regulation of macrophage derived foam cell differentiation"/>
    <property type="evidence" value="ECO:0000250"/>
    <property type="project" value="BHF-UCL"/>
</dbReference>
<dbReference type="GO" id="GO:0006898">
    <property type="term" value="P:receptor-mediated endocytosis"/>
    <property type="evidence" value="ECO:0000250"/>
    <property type="project" value="ARUK-UCL"/>
</dbReference>
<dbReference type="FunFam" id="3.10.250.10:FF:000011">
    <property type="entry name" value="Scavenger receptor class A member 5"/>
    <property type="match status" value="1"/>
</dbReference>
<dbReference type="Gene3D" id="3.10.250.10">
    <property type="entry name" value="SRCR-like domain"/>
    <property type="match status" value="1"/>
</dbReference>
<dbReference type="InterPro" id="IPR008160">
    <property type="entry name" value="Collagen"/>
</dbReference>
<dbReference type="InterPro" id="IPR003543">
    <property type="entry name" value="SR-AI/II"/>
</dbReference>
<dbReference type="InterPro" id="IPR001190">
    <property type="entry name" value="SRCR"/>
</dbReference>
<dbReference type="InterPro" id="IPR036772">
    <property type="entry name" value="SRCR-like_dom_sf"/>
</dbReference>
<dbReference type="PANTHER" id="PTHR48071:SF16">
    <property type="entry name" value="MACROPHAGE SCAVENGER RECEPTOR TYPES I AND II"/>
    <property type="match status" value="1"/>
</dbReference>
<dbReference type="PANTHER" id="PTHR48071">
    <property type="entry name" value="SRCR DOMAIN-CONTAINING PROTEIN"/>
    <property type="match status" value="1"/>
</dbReference>
<dbReference type="Pfam" id="PF01391">
    <property type="entry name" value="Collagen"/>
    <property type="match status" value="1"/>
</dbReference>
<dbReference type="Pfam" id="PF03523">
    <property type="entry name" value="Macscav_rec"/>
    <property type="match status" value="1"/>
</dbReference>
<dbReference type="Pfam" id="PF00530">
    <property type="entry name" value="SRCR"/>
    <property type="match status" value="1"/>
</dbReference>
<dbReference type="PRINTS" id="PR01408">
    <property type="entry name" value="MACSCAVRCPTR"/>
</dbReference>
<dbReference type="PRINTS" id="PR00258">
    <property type="entry name" value="SPERACTRCPTR"/>
</dbReference>
<dbReference type="SMART" id="SM00202">
    <property type="entry name" value="SR"/>
    <property type="match status" value="1"/>
</dbReference>
<dbReference type="SUPFAM" id="SSF56487">
    <property type="entry name" value="SRCR-like"/>
    <property type="match status" value="1"/>
</dbReference>
<dbReference type="PROSITE" id="PS00420">
    <property type="entry name" value="SRCR_1"/>
    <property type="match status" value="1"/>
</dbReference>
<dbReference type="PROSITE" id="PS50287">
    <property type="entry name" value="SRCR_2"/>
    <property type="match status" value="1"/>
</dbReference>
<keyword id="KW-0002">3D-structure</keyword>
<keyword id="KW-0025">Alternative splicing</keyword>
<keyword id="KW-0175">Coiled coil</keyword>
<keyword id="KW-0176">Collagen</keyword>
<keyword id="KW-1015">Disulfide bond</keyword>
<keyword id="KW-0254">Endocytosis</keyword>
<keyword id="KW-0325">Glycoprotein</keyword>
<keyword id="KW-0427">LDL</keyword>
<keyword id="KW-0472">Membrane</keyword>
<keyword id="KW-0597">Phosphoprotein</keyword>
<keyword id="KW-1267">Proteomics identification</keyword>
<keyword id="KW-0675">Receptor</keyword>
<keyword id="KW-1185">Reference proteome</keyword>
<keyword id="KW-0735">Signal-anchor</keyword>
<keyword id="KW-0812">Transmembrane</keyword>
<keyword id="KW-1133">Transmembrane helix</keyword>
<feature type="chain" id="PRO_0000181627" description="Macrophage scavenger receptor types I and II">
    <location>
        <begin position="1"/>
        <end position="451"/>
    </location>
</feature>
<feature type="topological domain" description="Cytoplasmic" evidence="2">
    <location>
        <begin position="1"/>
        <end position="50"/>
    </location>
</feature>
<feature type="transmembrane region" description="Helical; Signal-anchor for type II membrane protein" evidence="2">
    <location>
        <begin position="51"/>
        <end position="76"/>
    </location>
</feature>
<feature type="topological domain" description="Extracellular" evidence="2">
    <location>
        <begin position="77"/>
        <end position="451"/>
    </location>
</feature>
<feature type="domain" description="Collagen-like">
    <location>
        <begin position="273"/>
        <end position="341"/>
    </location>
</feature>
<feature type="domain" description="SRCR" evidence="3">
    <location>
        <begin position="350"/>
        <end position="450"/>
    </location>
</feature>
<feature type="region of interest" description="Spacer" evidence="15">
    <location>
        <begin position="77"/>
        <end position="109"/>
    </location>
</feature>
<feature type="region of interest" description="Disordered" evidence="4">
    <location>
        <begin position="267"/>
        <end position="346"/>
    </location>
</feature>
<feature type="coiled-coil region" evidence="2">
    <location>
        <begin position="171"/>
        <end position="255"/>
    </location>
</feature>
<feature type="modified residue" description="Phosphoserine" evidence="1">
    <location>
        <position position="27"/>
    </location>
</feature>
<feature type="glycosylation site" description="N-linked (GlcNAc...) asparagine" evidence="2">
    <location>
        <position position="82"/>
    </location>
</feature>
<feature type="glycosylation site" description="N-linked (GlcNAc...) asparagine" evidence="2">
    <location>
        <position position="102"/>
    </location>
</feature>
<feature type="glycosylation site" description="N-linked (GlcNAc...) asparagine" evidence="2">
    <location>
        <position position="143"/>
    </location>
</feature>
<feature type="glycosylation site" description="N-linked (GlcNAc...) asparagine" evidence="2">
    <location>
        <position position="184"/>
    </location>
</feature>
<feature type="glycosylation site" description="N-linked (GlcNAc...) asparagine" evidence="6">
    <location>
        <position position="221"/>
    </location>
</feature>
<feature type="glycosylation site" description="N-linked (GlcNAc...) asparagine" evidence="2">
    <location>
        <position position="249"/>
    </location>
</feature>
<feature type="glycosylation site" description="N-linked (GlcNAc...) asparagine" evidence="2">
    <location>
        <position position="267"/>
    </location>
</feature>
<feature type="disulfide bond" evidence="3 10">
    <location>
        <begin position="375"/>
        <end position="439"/>
    </location>
</feature>
<feature type="disulfide bond" evidence="3 10">
    <location>
        <begin position="388"/>
        <end position="449"/>
    </location>
</feature>
<feature type="disulfide bond" evidence="3 10">
    <location>
        <begin position="419"/>
        <end position="429"/>
    </location>
</feature>
<feature type="splice variant" id="VSP_036842" description="In isoform III." evidence="14">
    <original>TPFTKVRLVGGSGPHEGRVEILHSGQWGTICDDRWEVRVGQVVCRSLGYPGVQAVHKAAHFGQG</original>
    <variation>S</variation>
    <location>
        <begin position="345"/>
        <end position="408"/>
    </location>
</feature>
<feature type="splice variant" id="VSP_006229" description="In isoform II." evidence="13">
    <original>TPFTKVRLVGGSGP</original>
    <variation>RPVQLTDHIRAGPS</variation>
    <location>
        <begin position="345"/>
        <end position="358"/>
    </location>
</feature>
<feature type="splice variant" id="VSP_006230" description="In isoform II." evidence="13">
    <location>
        <begin position="359"/>
        <end position="451"/>
    </location>
</feature>
<feature type="sequence variant" id="VAR_025190" description="In dbSNP:rs35175081." evidence="12">
    <original>F</original>
    <variation>C</variation>
    <location>
        <position position="23"/>
    </location>
</feature>
<feature type="sequence variant" id="VAR_066581" description="Found in a family with prostate cancer; dbSNP:rs749666450." evidence="5">
    <original>P</original>
    <variation>A</variation>
    <location>
        <position position="36"/>
    </location>
</feature>
<feature type="sequence variant" id="VAR_066582" description="Found in patients with prostate cancer; dbSNP:rs145597376." evidence="5">
    <original>S</original>
    <variation>Y</variation>
    <location>
        <position position="41"/>
    </location>
</feature>
<feature type="sequence variant" id="VAR_066583" description="Found in patients with prostate cancer; dbSNP:rs117359034." evidence="5">
    <original>V</original>
    <variation>A</variation>
    <location>
        <position position="113"/>
    </location>
</feature>
<feature type="sequence variant" id="VAR_066584" description="Found in patients with prostate cancer; dbSNP:rs72552387." evidence="5">
    <original>D</original>
    <variation>Y</variation>
    <location>
        <position position="174"/>
    </location>
</feature>
<feature type="sequence variant" id="VAR_066585" description="Found in patients with Barrett esophagus; dbSNP:rs387906645." evidence="7">
    <original>L</original>
    <variation>V</variation>
    <location>
        <position position="254"/>
    </location>
</feature>
<feature type="sequence variant" id="VAR_052061" description="In dbSNP:rs13306543.">
    <original>T</original>
    <variation>I</variation>
    <location>
        <position position="269"/>
    </location>
</feature>
<feature type="sequence variant" id="VAR_025191" description="In dbSNP:rs2229388." evidence="5 12">
    <original>P</original>
    <variation>A</variation>
    <location>
        <position position="275"/>
    </location>
</feature>
<feature type="sequence variant" id="VAR_066586" description="Found in a family with prostate cancer; dbSNP:rs776370129." evidence="5">
    <original>G</original>
    <variation>S</variation>
    <location>
        <position position="369"/>
    </location>
</feature>
<feature type="sequence variant" id="VAR_066587" description="Found in patients with prostate cancer; dbSNP:rs138749399." evidence="5">
    <original>H</original>
    <variation>R</variation>
    <location>
        <position position="441"/>
    </location>
</feature>
<feature type="strand" evidence="16">
    <location>
        <begin position="350"/>
        <end position="357"/>
    </location>
</feature>
<feature type="strand" evidence="16">
    <location>
        <begin position="360"/>
        <end position="367"/>
    </location>
</feature>
<feature type="strand" evidence="16">
    <location>
        <begin position="370"/>
        <end position="376"/>
    </location>
</feature>
<feature type="helix" evidence="16">
    <location>
        <begin position="381"/>
        <end position="390"/>
    </location>
</feature>
<feature type="strand" evidence="16">
    <location>
        <begin position="394"/>
        <end position="400"/>
    </location>
</feature>
<feature type="turn" evidence="16">
    <location>
        <begin position="402"/>
        <end position="405"/>
    </location>
</feature>
<feature type="strand" evidence="16">
    <location>
        <begin position="412"/>
        <end position="418"/>
    </location>
</feature>
<feature type="helix" evidence="16">
    <location>
        <begin position="426"/>
        <end position="428"/>
    </location>
</feature>
<feature type="strand" evidence="16">
    <location>
        <begin position="429"/>
        <end position="432"/>
    </location>
</feature>
<feature type="helix" evidence="16">
    <location>
        <begin position="441"/>
        <end position="443"/>
    </location>
</feature>
<feature type="strand" evidence="16">
    <location>
        <begin position="446"/>
        <end position="450"/>
    </location>
</feature>
<accession>P21757</accession>
<accession>D3DSP3</accession>
<accession>O60505</accession>
<accession>P21759</accession>
<accession>Q45F10</accession>
<reference key="1">
    <citation type="journal article" date="1990" name="Proc. Natl. Acad. Sci. U.S.A.">
        <title>Human macrophage scavenger receptors: primary structure, expression, and localization in atherosclerotic lesions.</title>
        <authorList>
            <person name="Matsumoto A."/>
            <person name="Naito M."/>
            <person name="Itakura H."/>
            <person name="Ikemoto S."/>
            <person name="Asaoka H."/>
            <person name="Hayakawa I."/>
            <person name="Kanamori H."/>
            <person name="Aburatani H."/>
            <person name="Takaku F."/>
            <person name="Suzuki H."/>
            <person name="Kobari Y."/>
            <person name="Miyai T."/>
            <person name="Takahashi K."/>
            <person name="Cohen E.H."/>
            <person name="Wydro R."/>
            <person name="Housman D.E."/>
            <person name="Kodama T."/>
        </authorList>
    </citation>
    <scope>NUCLEOTIDE SEQUENCE [MRNA] (ISOFORMS I AND II)</scope>
    <scope>FUNCTION</scope>
    <scope>TISSUE SPECIFICITY</scope>
</reference>
<reference key="2">
    <citation type="journal article" date="1998" name="J. Lipid Res.">
        <title>A naturally occurring isoform of the human macrophage scavenger receptor (SR-A) gene generated by alternative splicing blocks modified LDL uptake.</title>
        <authorList>
            <person name="Gough P.J."/>
            <person name="Greaves D.R."/>
            <person name="Gordon S."/>
        </authorList>
    </citation>
    <scope>NUCLEOTIDE SEQUENCE [MRNA] (ISOFORM III)</scope>
    <scope>FUNCTION</scope>
    <scope>TISSUE SPECIFICITY</scope>
</reference>
<reference key="3">
    <citation type="submission" date="2005-07" db="EMBL/GenBank/DDBJ databases">
        <authorList>
            <consortium name="NIEHS SNPs program"/>
        </authorList>
    </citation>
    <scope>NUCLEOTIDE SEQUENCE [GENOMIC DNA]</scope>
    <scope>VARIANTS CYS-23 AND ALA-275</scope>
</reference>
<reference key="4">
    <citation type="journal article" date="2006" name="Nature">
        <title>DNA sequence and analysis of human chromosome 8.</title>
        <authorList>
            <person name="Nusbaum C."/>
            <person name="Mikkelsen T.S."/>
            <person name="Zody M.C."/>
            <person name="Asakawa S."/>
            <person name="Taudien S."/>
            <person name="Garber M."/>
            <person name="Kodira C.D."/>
            <person name="Schueler M.G."/>
            <person name="Shimizu A."/>
            <person name="Whittaker C.A."/>
            <person name="Chang J.L."/>
            <person name="Cuomo C.A."/>
            <person name="Dewar K."/>
            <person name="FitzGerald M.G."/>
            <person name="Yang X."/>
            <person name="Allen N.R."/>
            <person name="Anderson S."/>
            <person name="Asakawa T."/>
            <person name="Blechschmidt K."/>
            <person name="Bloom T."/>
            <person name="Borowsky M.L."/>
            <person name="Butler J."/>
            <person name="Cook A."/>
            <person name="Corum B."/>
            <person name="DeArellano K."/>
            <person name="DeCaprio D."/>
            <person name="Dooley K.T."/>
            <person name="Dorris L. III"/>
            <person name="Engels R."/>
            <person name="Gloeckner G."/>
            <person name="Hafez N."/>
            <person name="Hagopian D.S."/>
            <person name="Hall J.L."/>
            <person name="Ishikawa S.K."/>
            <person name="Jaffe D.B."/>
            <person name="Kamat A."/>
            <person name="Kudoh J."/>
            <person name="Lehmann R."/>
            <person name="Lokitsang T."/>
            <person name="Macdonald P."/>
            <person name="Major J.E."/>
            <person name="Matthews C.D."/>
            <person name="Mauceli E."/>
            <person name="Menzel U."/>
            <person name="Mihalev A.H."/>
            <person name="Minoshima S."/>
            <person name="Murayama Y."/>
            <person name="Naylor J.W."/>
            <person name="Nicol R."/>
            <person name="Nguyen C."/>
            <person name="O'Leary S.B."/>
            <person name="O'Neill K."/>
            <person name="Parker S.C.J."/>
            <person name="Polley A."/>
            <person name="Raymond C.K."/>
            <person name="Reichwald K."/>
            <person name="Rodriguez J."/>
            <person name="Sasaki T."/>
            <person name="Schilhabel M."/>
            <person name="Siddiqui R."/>
            <person name="Smith C.L."/>
            <person name="Sneddon T.P."/>
            <person name="Talamas J.A."/>
            <person name="Tenzin P."/>
            <person name="Topham K."/>
            <person name="Venkataraman V."/>
            <person name="Wen G."/>
            <person name="Yamazaki S."/>
            <person name="Young S.K."/>
            <person name="Zeng Q."/>
            <person name="Zimmer A.R."/>
            <person name="Rosenthal A."/>
            <person name="Birren B.W."/>
            <person name="Platzer M."/>
            <person name="Shimizu N."/>
            <person name="Lander E.S."/>
        </authorList>
    </citation>
    <scope>NUCLEOTIDE SEQUENCE [LARGE SCALE GENOMIC DNA]</scope>
</reference>
<reference key="5">
    <citation type="submission" date="2005-09" db="EMBL/GenBank/DDBJ databases">
        <authorList>
            <person name="Mural R.J."/>
            <person name="Istrail S."/>
            <person name="Sutton G.G."/>
            <person name="Florea L."/>
            <person name="Halpern A.L."/>
            <person name="Mobarry C.M."/>
            <person name="Lippert R."/>
            <person name="Walenz B."/>
            <person name="Shatkay H."/>
            <person name="Dew I."/>
            <person name="Miller J.R."/>
            <person name="Flanigan M.J."/>
            <person name="Edwards N.J."/>
            <person name="Bolanos R."/>
            <person name="Fasulo D."/>
            <person name="Halldorsson B.V."/>
            <person name="Hannenhalli S."/>
            <person name="Turner R."/>
            <person name="Yooseph S."/>
            <person name="Lu F."/>
            <person name="Nusskern D.R."/>
            <person name="Shue B.C."/>
            <person name="Zheng X.H."/>
            <person name="Zhong F."/>
            <person name="Delcher A.L."/>
            <person name="Huson D.H."/>
            <person name="Kravitz S.A."/>
            <person name="Mouchard L."/>
            <person name="Reinert K."/>
            <person name="Remington K.A."/>
            <person name="Clark A.G."/>
            <person name="Waterman M.S."/>
            <person name="Eichler E.E."/>
            <person name="Adams M.D."/>
            <person name="Hunkapiller M.W."/>
            <person name="Myers E.W."/>
            <person name="Venter J.C."/>
        </authorList>
    </citation>
    <scope>NUCLEOTIDE SEQUENCE [LARGE SCALE GENOMIC DNA]</scope>
</reference>
<reference key="6">
    <citation type="journal article" date="2004" name="Genome Res.">
        <title>The status, quality, and expansion of the NIH full-length cDNA project: the Mammalian Gene Collection (MGC).</title>
        <authorList>
            <consortium name="The MGC Project Team"/>
        </authorList>
    </citation>
    <scope>NUCLEOTIDE SEQUENCE [LARGE SCALE MRNA] (ISOFORM I)</scope>
    <source>
        <tissue>Testis</tissue>
    </source>
</reference>
<reference key="7">
    <citation type="journal article" date="1993" name="J. Biol. Chem.">
        <title>Structure, organization, and chromosomal mapping of the human macrophage scavenger receptor gene.</title>
        <authorList>
            <person name="Emi M."/>
            <person name="Asaoka H."/>
            <person name="Matsumoto A."/>
            <person name="Itakura H."/>
            <person name="Kurihara Y."/>
            <person name="Wada Y."/>
            <person name="Kanamori H."/>
            <person name="Yazaki Y."/>
            <person name="Takahashi E."/>
            <person name="Lepert M."/>
        </authorList>
    </citation>
    <scope>NUCLEOTIDE SEQUENCE [GENOMIC DNA] OF 155-272</scope>
</reference>
<reference key="8">
    <citation type="journal article" date="1996" name="J. Biol. Chem.">
        <title>Structures of class A macrophage scavenger receptors. Electron microscopic study of flexible, multidomain, fibrous proteins and determination of the disulfide bond pattern of the scavenger receptor cysteine-rich domain.</title>
        <authorList>
            <person name="Resnick D."/>
            <person name="Chatterton J.E."/>
            <person name="Schwartz K."/>
            <person name="Slayter H."/>
            <person name="Krieger M."/>
        </authorList>
    </citation>
    <scope>DISULFIDE BONDS IN SRCR DOMAIN</scope>
</reference>
<reference key="9">
    <citation type="journal article" date="2002" name="Nat. Genet.">
        <title>Germline mutations and sequence variants of the macrophage scavenger receptor 1 gene are associated with prostate cancer risk.</title>
        <authorList>
            <person name="Xu J."/>
            <person name="Zheng S.L."/>
            <person name="Komiya A."/>
            <person name="Mychaleckyj J.C."/>
            <person name="Isaacs S.D."/>
            <person name="Hu J.J."/>
            <person name="Sterling D."/>
            <person name="Lange E.M."/>
            <person name="Hawkins G.A."/>
            <person name="Turner A."/>
            <person name="Ewing C.M."/>
            <person name="Faith D.A."/>
            <person name="Johnson J.R."/>
            <person name="Suzuki H."/>
            <person name="Bujnovszky P."/>
            <person name="Wiley K.E."/>
            <person name="DeMarzo A.M."/>
            <person name="Bova G.S."/>
            <person name="Chang B."/>
            <person name="Hall M.C."/>
            <person name="McCullough D.L."/>
            <person name="Partin A.W."/>
            <person name="Kassabian V.S."/>
            <person name="Carpten J.D."/>
            <person name="Bailey-Wilson J.E."/>
            <person name="Trent J.M."/>
            <person name="Ohar J."/>
            <person name="Bleecker E.R."/>
            <person name="Walsh P.C."/>
            <person name="Isaacs W.B."/>
            <person name="Meyers D.A."/>
        </authorList>
    </citation>
    <scope>POSSIBLE INVOLVEMENT IN PC</scope>
    <scope>VARIANTS ALA-36; TYR-41; ALA-113; TYR-174; ALA-275; SER-369 AND ARG-441</scope>
</reference>
<reference key="10">
    <citation type="journal article" date="2004" name="Genome Biol.">
        <title>An unappreciated role for RNA surveillance.</title>
        <authorList>
            <person name="Hillman R.T."/>
            <person name="Green R.E."/>
            <person name="Brenner S.E."/>
        </authorList>
    </citation>
    <scope>SPLICE ISOFORM(S) THAT ARE POTENTIAL NMD TARGET(S)</scope>
</reference>
<reference key="11">
    <citation type="journal article" date="2009" name="J. Proteome Res.">
        <title>Glycoproteomics analysis of human liver tissue by combination of multiple enzyme digestion and hydrazide chemistry.</title>
        <authorList>
            <person name="Chen R."/>
            <person name="Jiang X."/>
            <person name="Sun D."/>
            <person name="Han G."/>
            <person name="Wang F."/>
            <person name="Ye M."/>
            <person name="Wang L."/>
            <person name="Zou H."/>
        </authorList>
    </citation>
    <scope>GLYCOSYLATION [LARGE SCALE ANALYSIS] AT ASN-221</scope>
    <source>
        <tissue>Liver</tissue>
    </source>
</reference>
<reference key="12">
    <citation type="journal article" date="2011" name="JAMA">
        <title>Germline mutations in MSR1, ASCC1, and CTHRC1 in patients with Barrett esophagus and esophageal adenocarcinoma.</title>
        <authorList>
            <person name="Orloff M."/>
            <person name="Peterson C."/>
            <person name="He X."/>
            <person name="Ganapathi S."/>
            <person name="Heald B."/>
            <person name="Yang Y.R."/>
            <person name="Bebek G."/>
            <person name="Romigh T."/>
            <person name="Song J.H."/>
            <person name="Wu W."/>
            <person name="David S."/>
            <person name="Cheng Y."/>
            <person name="Meltzer S.J."/>
            <person name="Eng C."/>
        </authorList>
    </citation>
    <scope>INVOLVEMENT IN BE</scope>
    <scope>VARIANT VAL-254</scope>
</reference>
<reference key="13">
    <citation type="journal article" date="2015" name="PLoS ONE">
        <title>SP-R210 (Myo18A) isoforms as intrinsic modulators of macrophage priming and activation.</title>
        <authorList>
            <person name="Yang L."/>
            <person name="Carrillo M."/>
            <person name="Wu Y.M."/>
            <person name="DiAngelo S.L."/>
            <person name="Silveyra P."/>
            <person name="Umstead T.M."/>
            <person name="Halstead E.S."/>
            <person name="Davies M.L."/>
            <person name="Hu S."/>
            <person name="Floros J."/>
            <person name="McCormack F.X."/>
            <person name="Christensen N.D."/>
            <person name="Chroneos Z.C."/>
        </authorList>
    </citation>
    <scope>INTERACTION WITH MYO18A</scope>
</reference>
<evidence type="ECO:0000250" key="1">
    <source>
        <dbReference type="UniProtKB" id="P30204"/>
    </source>
</evidence>
<evidence type="ECO:0000255" key="2"/>
<evidence type="ECO:0000255" key="3">
    <source>
        <dbReference type="PROSITE-ProRule" id="PRU00196"/>
    </source>
</evidence>
<evidence type="ECO:0000256" key="4">
    <source>
        <dbReference type="SAM" id="MobiDB-lite"/>
    </source>
</evidence>
<evidence type="ECO:0000269" key="5">
    <source>
    </source>
</evidence>
<evidence type="ECO:0000269" key="6">
    <source>
    </source>
</evidence>
<evidence type="ECO:0000269" key="7">
    <source>
    </source>
</evidence>
<evidence type="ECO:0000269" key="8">
    <source>
    </source>
</evidence>
<evidence type="ECO:0000269" key="9">
    <source>
    </source>
</evidence>
<evidence type="ECO:0000269" key="10">
    <source>
    </source>
</evidence>
<evidence type="ECO:0000269" key="11">
    <source>
    </source>
</evidence>
<evidence type="ECO:0000269" key="12">
    <source ref="3"/>
</evidence>
<evidence type="ECO:0000303" key="13">
    <source>
    </source>
</evidence>
<evidence type="ECO:0000303" key="14">
    <source>
    </source>
</evidence>
<evidence type="ECO:0000305" key="15"/>
<evidence type="ECO:0007829" key="16">
    <source>
        <dbReference type="PDB" id="7DPX"/>
    </source>
</evidence>
<organism>
    <name type="scientific">Homo sapiens</name>
    <name type="common">Human</name>
    <dbReference type="NCBI Taxonomy" id="9606"/>
    <lineage>
        <taxon>Eukaryota</taxon>
        <taxon>Metazoa</taxon>
        <taxon>Chordata</taxon>
        <taxon>Craniata</taxon>
        <taxon>Vertebrata</taxon>
        <taxon>Euteleostomi</taxon>
        <taxon>Mammalia</taxon>
        <taxon>Eutheria</taxon>
        <taxon>Euarchontoglires</taxon>
        <taxon>Primates</taxon>
        <taxon>Haplorrhini</taxon>
        <taxon>Catarrhini</taxon>
        <taxon>Hominidae</taxon>
        <taxon>Homo</taxon>
    </lineage>
</organism>
<protein>
    <recommendedName>
        <fullName>Macrophage scavenger receptor types I and II</fullName>
    </recommendedName>
    <alternativeName>
        <fullName>Macrophage acetylated LDL receptor I and II</fullName>
    </alternativeName>
    <alternativeName>
        <fullName>Scavenger receptor class A member 1</fullName>
    </alternativeName>
    <cdAntigenName>CD204</cdAntigenName>
</protein>